<sequence length="37" mass="4390">MRVQASVKRICRNCKIIRRKGVVRVICTDPRHKQRQG</sequence>
<gene>
    <name evidence="1" type="primary">rpmJ</name>
    <name type="ordered locus">azo3395</name>
</gene>
<feature type="chain" id="PRO_0000302154" description="Large ribosomal subunit protein bL36">
    <location>
        <begin position="1"/>
        <end position="37"/>
    </location>
</feature>
<dbReference type="EMBL" id="AM406670">
    <property type="protein sequence ID" value="CAL96011.1"/>
    <property type="molecule type" value="Genomic_DNA"/>
</dbReference>
<dbReference type="RefSeq" id="WP_011767118.1">
    <property type="nucleotide sequence ID" value="NC_008702.1"/>
</dbReference>
<dbReference type="SMR" id="A1KB05"/>
<dbReference type="STRING" id="62928.azo3395"/>
<dbReference type="KEGG" id="aoa:dqs_3534"/>
<dbReference type="KEGG" id="azo:azo3395"/>
<dbReference type="eggNOG" id="COG0257">
    <property type="taxonomic scope" value="Bacteria"/>
</dbReference>
<dbReference type="HOGENOM" id="CLU_135723_6_2_4"/>
<dbReference type="Proteomes" id="UP000002588">
    <property type="component" value="Chromosome"/>
</dbReference>
<dbReference type="GO" id="GO:0005737">
    <property type="term" value="C:cytoplasm"/>
    <property type="evidence" value="ECO:0007669"/>
    <property type="project" value="UniProtKB-ARBA"/>
</dbReference>
<dbReference type="GO" id="GO:1990904">
    <property type="term" value="C:ribonucleoprotein complex"/>
    <property type="evidence" value="ECO:0007669"/>
    <property type="project" value="UniProtKB-KW"/>
</dbReference>
<dbReference type="GO" id="GO:0005840">
    <property type="term" value="C:ribosome"/>
    <property type="evidence" value="ECO:0007669"/>
    <property type="project" value="UniProtKB-KW"/>
</dbReference>
<dbReference type="GO" id="GO:0003735">
    <property type="term" value="F:structural constituent of ribosome"/>
    <property type="evidence" value="ECO:0007669"/>
    <property type="project" value="InterPro"/>
</dbReference>
<dbReference type="GO" id="GO:0006412">
    <property type="term" value="P:translation"/>
    <property type="evidence" value="ECO:0007669"/>
    <property type="project" value="UniProtKB-UniRule"/>
</dbReference>
<dbReference type="HAMAP" id="MF_00251">
    <property type="entry name" value="Ribosomal_bL36"/>
    <property type="match status" value="1"/>
</dbReference>
<dbReference type="InterPro" id="IPR000473">
    <property type="entry name" value="Ribosomal_bL36"/>
</dbReference>
<dbReference type="InterPro" id="IPR035977">
    <property type="entry name" value="Ribosomal_bL36_sp"/>
</dbReference>
<dbReference type="NCBIfam" id="TIGR01022">
    <property type="entry name" value="rpmJ_bact"/>
    <property type="match status" value="1"/>
</dbReference>
<dbReference type="PANTHER" id="PTHR42888">
    <property type="entry name" value="50S RIBOSOMAL PROTEIN L36, CHLOROPLASTIC"/>
    <property type="match status" value="1"/>
</dbReference>
<dbReference type="PANTHER" id="PTHR42888:SF1">
    <property type="entry name" value="LARGE RIBOSOMAL SUBUNIT PROTEIN BL36C"/>
    <property type="match status" value="1"/>
</dbReference>
<dbReference type="Pfam" id="PF00444">
    <property type="entry name" value="Ribosomal_L36"/>
    <property type="match status" value="1"/>
</dbReference>
<dbReference type="SUPFAM" id="SSF57840">
    <property type="entry name" value="Ribosomal protein L36"/>
    <property type="match status" value="1"/>
</dbReference>
<dbReference type="PROSITE" id="PS00828">
    <property type="entry name" value="RIBOSOMAL_L36"/>
    <property type="match status" value="1"/>
</dbReference>
<name>RL36_AZOSB</name>
<reference key="1">
    <citation type="journal article" date="2006" name="Nat. Biotechnol.">
        <title>Complete genome of the mutualistic, N2-fixing grass endophyte Azoarcus sp. strain BH72.</title>
        <authorList>
            <person name="Krause A."/>
            <person name="Ramakumar A."/>
            <person name="Bartels D."/>
            <person name="Battistoni F."/>
            <person name="Bekel T."/>
            <person name="Boch J."/>
            <person name="Boehm M."/>
            <person name="Friedrich F."/>
            <person name="Hurek T."/>
            <person name="Krause L."/>
            <person name="Linke B."/>
            <person name="McHardy A.C."/>
            <person name="Sarkar A."/>
            <person name="Schneiker S."/>
            <person name="Syed A.A."/>
            <person name="Thauer R."/>
            <person name="Vorhoelter F.-J."/>
            <person name="Weidner S."/>
            <person name="Puehler A."/>
            <person name="Reinhold-Hurek B."/>
            <person name="Kaiser O."/>
            <person name="Goesmann A."/>
        </authorList>
    </citation>
    <scope>NUCLEOTIDE SEQUENCE [LARGE SCALE GENOMIC DNA]</scope>
    <source>
        <strain>BH72</strain>
    </source>
</reference>
<proteinExistence type="inferred from homology"/>
<protein>
    <recommendedName>
        <fullName evidence="1">Large ribosomal subunit protein bL36</fullName>
    </recommendedName>
    <alternativeName>
        <fullName evidence="2">50S ribosomal protein L36</fullName>
    </alternativeName>
</protein>
<accession>A1KB05</accession>
<evidence type="ECO:0000255" key="1">
    <source>
        <dbReference type="HAMAP-Rule" id="MF_00251"/>
    </source>
</evidence>
<evidence type="ECO:0000305" key="2"/>
<organism>
    <name type="scientific">Azoarcus sp. (strain BH72)</name>
    <dbReference type="NCBI Taxonomy" id="418699"/>
    <lineage>
        <taxon>Bacteria</taxon>
        <taxon>Pseudomonadati</taxon>
        <taxon>Pseudomonadota</taxon>
        <taxon>Betaproteobacteria</taxon>
        <taxon>Rhodocyclales</taxon>
        <taxon>Zoogloeaceae</taxon>
        <taxon>Azoarcus</taxon>
    </lineage>
</organism>
<keyword id="KW-1185">Reference proteome</keyword>
<keyword id="KW-0687">Ribonucleoprotein</keyword>
<keyword id="KW-0689">Ribosomal protein</keyword>
<comment type="similarity">
    <text evidence="1">Belongs to the bacterial ribosomal protein bL36 family.</text>
</comment>